<dbReference type="EC" id="2.3.1.274" evidence="1"/>
<dbReference type="EMBL" id="CP001389">
    <property type="protein sequence ID" value="ACP24761.1"/>
    <property type="molecule type" value="Genomic_DNA"/>
</dbReference>
<dbReference type="RefSeq" id="WP_012707545.1">
    <property type="nucleotide sequence ID" value="NC_012587.1"/>
</dbReference>
<dbReference type="RefSeq" id="YP_002825514.1">
    <property type="nucleotide sequence ID" value="NC_012587.1"/>
</dbReference>
<dbReference type="SMR" id="C3M9J5"/>
<dbReference type="STRING" id="394.NGR_c09710"/>
<dbReference type="KEGG" id="rhi:NGR_c09710"/>
<dbReference type="PATRIC" id="fig|394.7.peg.3792"/>
<dbReference type="eggNOG" id="COG0416">
    <property type="taxonomic scope" value="Bacteria"/>
</dbReference>
<dbReference type="HOGENOM" id="CLU_039379_1_0_5"/>
<dbReference type="OrthoDB" id="9806408at2"/>
<dbReference type="UniPathway" id="UPA00085"/>
<dbReference type="Proteomes" id="UP000001054">
    <property type="component" value="Chromosome"/>
</dbReference>
<dbReference type="GO" id="GO:0005737">
    <property type="term" value="C:cytoplasm"/>
    <property type="evidence" value="ECO:0007669"/>
    <property type="project" value="UniProtKB-SubCell"/>
</dbReference>
<dbReference type="GO" id="GO:0043811">
    <property type="term" value="F:phosphate:acyl-[acyl carrier protein] acyltransferase activity"/>
    <property type="evidence" value="ECO:0007669"/>
    <property type="project" value="UniProtKB-UniRule"/>
</dbReference>
<dbReference type="GO" id="GO:0006633">
    <property type="term" value="P:fatty acid biosynthetic process"/>
    <property type="evidence" value="ECO:0007669"/>
    <property type="project" value="UniProtKB-UniRule"/>
</dbReference>
<dbReference type="GO" id="GO:0008654">
    <property type="term" value="P:phospholipid biosynthetic process"/>
    <property type="evidence" value="ECO:0007669"/>
    <property type="project" value="UniProtKB-KW"/>
</dbReference>
<dbReference type="Gene3D" id="3.40.718.10">
    <property type="entry name" value="Isopropylmalate Dehydrogenase"/>
    <property type="match status" value="1"/>
</dbReference>
<dbReference type="HAMAP" id="MF_00019">
    <property type="entry name" value="PlsX"/>
    <property type="match status" value="1"/>
</dbReference>
<dbReference type="InterPro" id="IPR003664">
    <property type="entry name" value="FA_synthesis"/>
</dbReference>
<dbReference type="InterPro" id="IPR012281">
    <property type="entry name" value="Phospholipid_synth_PlsX-like"/>
</dbReference>
<dbReference type="NCBIfam" id="TIGR00182">
    <property type="entry name" value="plsX"/>
    <property type="match status" value="1"/>
</dbReference>
<dbReference type="PANTHER" id="PTHR30100">
    <property type="entry name" value="FATTY ACID/PHOSPHOLIPID SYNTHESIS PROTEIN PLSX"/>
    <property type="match status" value="1"/>
</dbReference>
<dbReference type="PANTHER" id="PTHR30100:SF1">
    <property type="entry name" value="PHOSPHATE ACYLTRANSFERASE"/>
    <property type="match status" value="1"/>
</dbReference>
<dbReference type="Pfam" id="PF02504">
    <property type="entry name" value="FA_synthesis"/>
    <property type="match status" value="1"/>
</dbReference>
<dbReference type="PIRSF" id="PIRSF002465">
    <property type="entry name" value="Phsphlp_syn_PlsX"/>
    <property type="match status" value="1"/>
</dbReference>
<dbReference type="SUPFAM" id="SSF53659">
    <property type="entry name" value="Isocitrate/Isopropylmalate dehydrogenase-like"/>
    <property type="match status" value="1"/>
</dbReference>
<protein>
    <recommendedName>
        <fullName evidence="1">Phosphate acyltransferase</fullName>
        <ecNumber evidence="1">2.3.1.274</ecNumber>
    </recommendedName>
    <alternativeName>
        <fullName evidence="1">Acyl-ACP phosphotransacylase</fullName>
    </alternativeName>
    <alternativeName>
        <fullName evidence="1">Acyl-[acyl-carrier-protein]--phosphate acyltransferase</fullName>
    </alternativeName>
    <alternativeName>
        <fullName evidence="1">Phosphate-acyl-ACP acyltransferase</fullName>
    </alternativeName>
</protein>
<proteinExistence type="inferred from homology"/>
<organism>
    <name type="scientific">Sinorhizobium fredii (strain NBRC 101917 / NGR234)</name>
    <dbReference type="NCBI Taxonomy" id="394"/>
    <lineage>
        <taxon>Bacteria</taxon>
        <taxon>Pseudomonadati</taxon>
        <taxon>Pseudomonadota</taxon>
        <taxon>Alphaproteobacteria</taxon>
        <taxon>Hyphomicrobiales</taxon>
        <taxon>Rhizobiaceae</taxon>
        <taxon>Sinorhizobium/Ensifer group</taxon>
        <taxon>Sinorhizobium</taxon>
    </lineage>
</organism>
<gene>
    <name evidence="1" type="primary">plsX</name>
    <name type="ordered locus">NGR_c09710</name>
</gene>
<keyword id="KW-0963">Cytoplasm</keyword>
<keyword id="KW-0444">Lipid biosynthesis</keyword>
<keyword id="KW-0443">Lipid metabolism</keyword>
<keyword id="KW-0594">Phospholipid biosynthesis</keyword>
<keyword id="KW-1208">Phospholipid metabolism</keyword>
<keyword id="KW-1185">Reference proteome</keyword>
<keyword id="KW-0808">Transferase</keyword>
<comment type="function">
    <text evidence="1">Catalyzes the reversible formation of acyl-phosphate (acyl-PO(4)) from acyl-[acyl-carrier-protein] (acyl-ACP). This enzyme utilizes acyl-ACP as fatty acyl donor, but not acyl-CoA.</text>
</comment>
<comment type="catalytic activity">
    <reaction evidence="1">
        <text>a fatty acyl-[ACP] + phosphate = an acyl phosphate + holo-[ACP]</text>
        <dbReference type="Rhea" id="RHEA:42292"/>
        <dbReference type="Rhea" id="RHEA-COMP:9685"/>
        <dbReference type="Rhea" id="RHEA-COMP:14125"/>
        <dbReference type="ChEBI" id="CHEBI:43474"/>
        <dbReference type="ChEBI" id="CHEBI:59918"/>
        <dbReference type="ChEBI" id="CHEBI:64479"/>
        <dbReference type="ChEBI" id="CHEBI:138651"/>
        <dbReference type="EC" id="2.3.1.274"/>
    </reaction>
</comment>
<comment type="pathway">
    <text evidence="1">Lipid metabolism; phospholipid metabolism.</text>
</comment>
<comment type="subunit">
    <text evidence="1">Homodimer. Probably interacts with PlsY.</text>
</comment>
<comment type="subcellular location">
    <subcellularLocation>
        <location evidence="1">Cytoplasm</location>
    </subcellularLocation>
    <text evidence="1">Associated with the membrane possibly through PlsY.</text>
</comment>
<comment type="similarity">
    <text evidence="1">Belongs to the PlsX family.</text>
</comment>
<evidence type="ECO:0000255" key="1">
    <source>
        <dbReference type="HAMAP-Rule" id="MF_00019"/>
    </source>
</evidence>
<sequence>MVRISLDVMGGDYGPEVVIPGAARALERHPDIKFVLFGQEARCAELLAKYPKLQASSTFHDCEIAVGMDEKPSQALRRGRGKSTMWKAIDAINADEADVVVSAGNTGALMAMSVFCLRTMQGIQRPAIAAIWPTLKGESIVLDVGATIGADAQQLMDFALMGGAMARALFEVERPSVGLLNVGVEEIKGQEEVKEAGRLIREANIEGIEYYGFVEGDDIGRGTVDVVVTEGFSGNIALKAAEGTARQIAEYLRSAMSRTLLAKIGYIFAKGAFDRLREKMDPRKVNGGVFLGLNGVVIKSHGGTDAEGFAAAIDVGYDMVKNGLKAKIEADLARYHGAEPTEALPPA</sequence>
<name>PLSX_SINFN</name>
<accession>C3M9J5</accession>
<feature type="chain" id="PRO_1000193142" description="Phosphate acyltransferase">
    <location>
        <begin position="1"/>
        <end position="347"/>
    </location>
</feature>
<reference key="1">
    <citation type="journal article" date="2009" name="Appl. Environ. Microbiol.">
        <title>Rhizobium sp. strain NGR234 possesses a remarkable number of secretion systems.</title>
        <authorList>
            <person name="Schmeisser C."/>
            <person name="Liesegang H."/>
            <person name="Krysciak D."/>
            <person name="Bakkou N."/>
            <person name="Le Quere A."/>
            <person name="Wollherr A."/>
            <person name="Heinemeyer I."/>
            <person name="Morgenstern B."/>
            <person name="Pommerening-Roeser A."/>
            <person name="Flores M."/>
            <person name="Palacios R."/>
            <person name="Brenner S."/>
            <person name="Gottschalk G."/>
            <person name="Schmitz R.A."/>
            <person name="Broughton W.J."/>
            <person name="Perret X."/>
            <person name="Strittmatter A.W."/>
            <person name="Streit W.R."/>
        </authorList>
    </citation>
    <scope>NUCLEOTIDE SEQUENCE [LARGE SCALE GENOMIC DNA]</scope>
    <source>
        <strain>NBRC 101917 / NGR234</strain>
    </source>
</reference>